<sequence>MTPEHLPTEQYEAQLAEKVVRLQSMMAPFSDLVPEVFRSPVSHYRMRAEFRIWHDGDDLYHIIFDQQTKSRIRVDSFPAASELINQLMTAMIAGVRNNPVLRHKLFQIDYLTTLSNQAVVSLLYHKKLDDEWRQEAEALRDALRAQNLNVHLIGRATKTKIELDQDYIDERLPVAGKEMIYRQVENSFTQPNAAMNIQMLEWALDVTKGSKGDLLELYCGNGNFSLALARNFDRVLATEIAKPSVAAAQYNIAANHIDNVQIIRMAAEEFTQAMNGVREFNRLQGIDLKSYQCETIFVDPPRSGLDSETEKMVQAYPCILYISCNPETLCKNLETLSQTHKVERLALFDQFPYTHHMECGVLLTAK</sequence>
<protein>
    <recommendedName>
        <fullName evidence="1">tRNA/tmRNA (uracil-C(5))-methyltransferase</fullName>
        <ecNumber evidence="1">2.1.1.-</ecNumber>
        <ecNumber evidence="1">2.1.1.35</ecNumber>
    </recommendedName>
    <alternativeName>
        <fullName evidence="1">tRNA (uracil(54)-C(5))-methyltransferase</fullName>
    </alternativeName>
    <alternativeName>
        <fullName evidence="1">tRNA(m5U54)-methyltransferase</fullName>
        <shortName evidence="1">RUMT</shortName>
    </alternativeName>
    <alternativeName>
        <fullName evidence="1">tmRNA (uracil(341)-C(5))-methyltransferase</fullName>
    </alternativeName>
</protein>
<comment type="function">
    <text evidence="1">Dual-specificity methyltransferase that catalyzes the formation of 5-methyluridine at position 54 (m5U54) in all tRNAs, and that of position 341 (m5U341) in tmRNA (transfer-mRNA).</text>
</comment>
<comment type="catalytic activity">
    <reaction evidence="1">
        <text>uridine(54) in tRNA + S-adenosyl-L-methionine = 5-methyluridine(54) in tRNA + S-adenosyl-L-homocysteine + H(+)</text>
        <dbReference type="Rhea" id="RHEA:42712"/>
        <dbReference type="Rhea" id="RHEA-COMP:10167"/>
        <dbReference type="Rhea" id="RHEA-COMP:10193"/>
        <dbReference type="ChEBI" id="CHEBI:15378"/>
        <dbReference type="ChEBI" id="CHEBI:57856"/>
        <dbReference type="ChEBI" id="CHEBI:59789"/>
        <dbReference type="ChEBI" id="CHEBI:65315"/>
        <dbReference type="ChEBI" id="CHEBI:74447"/>
        <dbReference type="EC" id="2.1.1.35"/>
    </reaction>
</comment>
<comment type="catalytic activity">
    <reaction evidence="1">
        <text>uridine(341) in tmRNA + S-adenosyl-L-methionine = 5-methyluridine(341) in tmRNA + S-adenosyl-L-homocysteine + H(+)</text>
        <dbReference type="Rhea" id="RHEA:43612"/>
        <dbReference type="Rhea" id="RHEA-COMP:10630"/>
        <dbReference type="Rhea" id="RHEA-COMP:10631"/>
        <dbReference type="ChEBI" id="CHEBI:15378"/>
        <dbReference type="ChEBI" id="CHEBI:57856"/>
        <dbReference type="ChEBI" id="CHEBI:59789"/>
        <dbReference type="ChEBI" id="CHEBI:65315"/>
        <dbReference type="ChEBI" id="CHEBI:74447"/>
    </reaction>
</comment>
<comment type="similarity">
    <text evidence="1">Belongs to the class I-like SAM-binding methyltransferase superfamily. RNA M5U methyltransferase family. TrmA subfamily.</text>
</comment>
<keyword id="KW-0489">Methyltransferase</keyword>
<keyword id="KW-1185">Reference proteome</keyword>
<keyword id="KW-0949">S-adenosyl-L-methionine</keyword>
<keyword id="KW-0808">Transferase</keyword>
<keyword id="KW-0819">tRNA processing</keyword>
<accession>B2TWG0</accession>
<dbReference type="EC" id="2.1.1.-" evidence="1"/>
<dbReference type="EC" id="2.1.1.35" evidence="1"/>
<dbReference type="EMBL" id="CP001063">
    <property type="protein sequence ID" value="ACD08201.1"/>
    <property type="molecule type" value="Genomic_DNA"/>
</dbReference>
<dbReference type="RefSeq" id="WP_000187019.1">
    <property type="nucleotide sequence ID" value="NC_010658.1"/>
</dbReference>
<dbReference type="SMR" id="B2TWG0"/>
<dbReference type="STRING" id="344609.SbBS512_E4451"/>
<dbReference type="GeneID" id="93777928"/>
<dbReference type="KEGG" id="sbc:SbBS512_E4451"/>
<dbReference type="HOGENOM" id="CLU_043022_0_0_6"/>
<dbReference type="Proteomes" id="UP000001030">
    <property type="component" value="Chromosome"/>
</dbReference>
<dbReference type="GO" id="GO:0005829">
    <property type="term" value="C:cytosol"/>
    <property type="evidence" value="ECO:0007669"/>
    <property type="project" value="TreeGrafter"/>
</dbReference>
<dbReference type="GO" id="GO:0019843">
    <property type="term" value="F:rRNA binding"/>
    <property type="evidence" value="ECO:0007669"/>
    <property type="project" value="TreeGrafter"/>
</dbReference>
<dbReference type="GO" id="GO:0030697">
    <property type="term" value="F:tRNA (uracil(54)-C5)-methyltransferase activity, S-adenosyl methionine-dependent"/>
    <property type="evidence" value="ECO:0007669"/>
    <property type="project" value="UniProtKB-UniRule"/>
</dbReference>
<dbReference type="GO" id="GO:0000049">
    <property type="term" value="F:tRNA binding"/>
    <property type="evidence" value="ECO:0007669"/>
    <property type="project" value="TreeGrafter"/>
</dbReference>
<dbReference type="GO" id="GO:0030488">
    <property type="term" value="P:tRNA methylation"/>
    <property type="evidence" value="ECO:0007669"/>
    <property type="project" value="UniProtKB-UniRule"/>
</dbReference>
<dbReference type="CDD" id="cd02440">
    <property type="entry name" value="AdoMet_MTases"/>
    <property type="match status" value="1"/>
</dbReference>
<dbReference type="FunFam" id="2.40.50.1070:FF:000001">
    <property type="entry name" value="tRNA/tmRNA (uracil-C(5))-methyltransferase"/>
    <property type="match status" value="1"/>
</dbReference>
<dbReference type="FunFam" id="3.40.50.150:FF:000012">
    <property type="entry name" value="tRNA/tmRNA (uracil-C(5))-methyltransferase"/>
    <property type="match status" value="1"/>
</dbReference>
<dbReference type="Gene3D" id="2.40.50.1070">
    <property type="match status" value="1"/>
</dbReference>
<dbReference type="Gene3D" id="3.40.50.150">
    <property type="entry name" value="Vaccinia Virus protein VP39"/>
    <property type="match status" value="1"/>
</dbReference>
<dbReference type="HAMAP" id="MF_01011">
    <property type="entry name" value="RNA_methyltr_TrmA"/>
    <property type="match status" value="1"/>
</dbReference>
<dbReference type="InterPro" id="IPR030390">
    <property type="entry name" value="MeTrfase_TrmA_AS"/>
</dbReference>
<dbReference type="InterPro" id="IPR030391">
    <property type="entry name" value="MeTrfase_TrmA_CS"/>
</dbReference>
<dbReference type="InterPro" id="IPR029063">
    <property type="entry name" value="SAM-dependent_MTases_sf"/>
</dbReference>
<dbReference type="InterPro" id="IPR011869">
    <property type="entry name" value="TrmA_MeTrfase"/>
</dbReference>
<dbReference type="InterPro" id="IPR010280">
    <property type="entry name" value="U5_MeTrfase_fam"/>
</dbReference>
<dbReference type="NCBIfam" id="TIGR02143">
    <property type="entry name" value="trmA_only"/>
    <property type="match status" value="1"/>
</dbReference>
<dbReference type="PANTHER" id="PTHR47790">
    <property type="entry name" value="TRNA/TMRNA (URACIL-C(5))-METHYLTRANSFERASE"/>
    <property type="match status" value="1"/>
</dbReference>
<dbReference type="PANTHER" id="PTHR47790:SF2">
    <property type="entry name" value="TRNA_TMRNA (URACIL-C(5))-METHYLTRANSFERASE"/>
    <property type="match status" value="1"/>
</dbReference>
<dbReference type="Pfam" id="PF05958">
    <property type="entry name" value="tRNA_U5-meth_tr"/>
    <property type="match status" value="1"/>
</dbReference>
<dbReference type="SUPFAM" id="SSF53335">
    <property type="entry name" value="S-adenosyl-L-methionine-dependent methyltransferases"/>
    <property type="match status" value="1"/>
</dbReference>
<dbReference type="PROSITE" id="PS51687">
    <property type="entry name" value="SAM_MT_RNA_M5U"/>
    <property type="match status" value="1"/>
</dbReference>
<dbReference type="PROSITE" id="PS01230">
    <property type="entry name" value="TRMA_1"/>
    <property type="match status" value="1"/>
</dbReference>
<dbReference type="PROSITE" id="PS01231">
    <property type="entry name" value="TRMA_2"/>
    <property type="match status" value="1"/>
</dbReference>
<proteinExistence type="inferred from homology"/>
<gene>
    <name evidence="1" type="primary">trmA</name>
    <name type="ordered locus">SbBS512_E4451</name>
</gene>
<reference key="1">
    <citation type="submission" date="2008-05" db="EMBL/GenBank/DDBJ databases">
        <title>Complete sequence of Shigella boydii serotype 18 strain BS512.</title>
        <authorList>
            <person name="Rasko D.A."/>
            <person name="Rosovitz M."/>
            <person name="Maurelli A.T."/>
            <person name="Myers G."/>
            <person name="Seshadri R."/>
            <person name="Cer R."/>
            <person name="Jiang L."/>
            <person name="Ravel J."/>
            <person name="Sebastian Y."/>
        </authorList>
    </citation>
    <scope>NUCLEOTIDE SEQUENCE [LARGE SCALE GENOMIC DNA]</scope>
    <source>
        <strain>CDC 3083-94 / BS512</strain>
    </source>
</reference>
<evidence type="ECO:0000255" key="1">
    <source>
        <dbReference type="HAMAP-Rule" id="MF_01011"/>
    </source>
</evidence>
<organism>
    <name type="scientific">Shigella boydii serotype 18 (strain CDC 3083-94 / BS512)</name>
    <dbReference type="NCBI Taxonomy" id="344609"/>
    <lineage>
        <taxon>Bacteria</taxon>
        <taxon>Pseudomonadati</taxon>
        <taxon>Pseudomonadota</taxon>
        <taxon>Gammaproteobacteria</taxon>
        <taxon>Enterobacterales</taxon>
        <taxon>Enterobacteriaceae</taxon>
        <taxon>Shigella</taxon>
    </lineage>
</organism>
<name>TRMA_SHIB3</name>
<feature type="chain" id="PRO_1000198559" description="tRNA/tmRNA (uracil-C(5))-methyltransferase">
    <location>
        <begin position="1"/>
        <end position="366"/>
    </location>
</feature>
<feature type="active site" description="Nucleophile" evidence="1">
    <location>
        <position position="324"/>
    </location>
</feature>
<feature type="active site" description="Proton acceptor" evidence="1">
    <location>
        <position position="358"/>
    </location>
</feature>
<feature type="binding site" evidence="1">
    <location>
        <position position="190"/>
    </location>
    <ligand>
        <name>S-adenosyl-L-methionine</name>
        <dbReference type="ChEBI" id="CHEBI:59789"/>
    </ligand>
</feature>
<feature type="binding site" evidence="1">
    <location>
        <position position="218"/>
    </location>
    <ligand>
        <name>S-adenosyl-L-methionine</name>
        <dbReference type="ChEBI" id="CHEBI:59789"/>
    </ligand>
</feature>
<feature type="binding site" evidence="1">
    <location>
        <position position="223"/>
    </location>
    <ligand>
        <name>S-adenosyl-L-methionine</name>
        <dbReference type="ChEBI" id="CHEBI:59789"/>
    </ligand>
</feature>
<feature type="binding site" evidence="1">
    <location>
        <position position="239"/>
    </location>
    <ligand>
        <name>S-adenosyl-L-methionine</name>
        <dbReference type="ChEBI" id="CHEBI:59789"/>
    </ligand>
</feature>
<feature type="binding site" evidence="1">
    <location>
        <position position="299"/>
    </location>
    <ligand>
        <name>S-adenosyl-L-methionine</name>
        <dbReference type="ChEBI" id="CHEBI:59789"/>
    </ligand>
</feature>